<protein>
    <recommendedName>
        <fullName>Nuclear factor of activated T-cells, cytoplasmic 1</fullName>
        <shortName>NF-ATc1</shortName>
        <shortName>NFATc1</shortName>
    </recommendedName>
    <alternativeName>
        <fullName>NFAT transcription complex cytosolic component</fullName>
        <shortName>NF-ATc</shortName>
        <shortName>NFATc</shortName>
    </alternativeName>
</protein>
<evidence type="ECO:0000250" key="1"/>
<evidence type="ECO:0000250" key="2">
    <source>
        <dbReference type="UniProtKB" id="O88942"/>
    </source>
</evidence>
<evidence type="ECO:0000250" key="3">
    <source>
        <dbReference type="UniProtKB" id="O95644"/>
    </source>
</evidence>
<evidence type="ECO:0000255" key="4">
    <source>
        <dbReference type="PROSITE-ProRule" id="PRU00265"/>
    </source>
</evidence>
<evidence type="ECO:0000256" key="5">
    <source>
        <dbReference type="SAM" id="MobiDB-lite"/>
    </source>
</evidence>
<evidence type="ECO:0000269" key="6">
    <source>
    </source>
</evidence>
<evidence type="ECO:0000305" key="7"/>
<proteinExistence type="evidence at protein level"/>
<organism>
    <name type="scientific">Bos taurus</name>
    <name type="common">Bovine</name>
    <dbReference type="NCBI Taxonomy" id="9913"/>
    <lineage>
        <taxon>Eukaryota</taxon>
        <taxon>Metazoa</taxon>
        <taxon>Chordata</taxon>
        <taxon>Craniata</taxon>
        <taxon>Vertebrata</taxon>
        <taxon>Euteleostomi</taxon>
        <taxon>Mammalia</taxon>
        <taxon>Eutheria</taxon>
        <taxon>Laurasiatheria</taxon>
        <taxon>Artiodactyla</taxon>
        <taxon>Ruminantia</taxon>
        <taxon>Pecora</taxon>
        <taxon>Bovidae</taxon>
        <taxon>Bovinae</taxon>
        <taxon>Bos</taxon>
    </lineage>
</organism>
<dbReference type="SMR" id="P98201"/>
<dbReference type="FunCoup" id="P98201">
    <property type="interactions" value="220"/>
</dbReference>
<dbReference type="STRING" id="9913.ENSBTAP00000000859"/>
<dbReference type="PaxDb" id="9913-ENSBTAP00000000859"/>
<dbReference type="eggNOG" id="ENOG502QTX8">
    <property type="taxonomic scope" value="Eukaryota"/>
</dbReference>
<dbReference type="HOGENOM" id="CLU_010185_1_0_1"/>
<dbReference type="InParanoid" id="P98201"/>
<dbReference type="OrthoDB" id="5346094at2759"/>
<dbReference type="Proteomes" id="UP000009136">
    <property type="component" value="Unplaced"/>
</dbReference>
<dbReference type="GO" id="GO:0005737">
    <property type="term" value="C:cytoplasm"/>
    <property type="evidence" value="ECO:0000250"/>
    <property type="project" value="UniProtKB"/>
</dbReference>
<dbReference type="GO" id="GO:0005634">
    <property type="term" value="C:nucleus"/>
    <property type="evidence" value="ECO:0000250"/>
    <property type="project" value="UniProtKB"/>
</dbReference>
<dbReference type="GO" id="GO:0005667">
    <property type="term" value="C:transcription regulator complex"/>
    <property type="evidence" value="ECO:0000318"/>
    <property type="project" value="GO_Central"/>
</dbReference>
<dbReference type="GO" id="GO:0000981">
    <property type="term" value="F:DNA-binding transcription factor activity, RNA polymerase II-specific"/>
    <property type="evidence" value="ECO:0000318"/>
    <property type="project" value="GO_Central"/>
</dbReference>
<dbReference type="GO" id="GO:0000978">
    <property type="term" value="F:RNA polymerase II cis-regulatory region sequence-specific DNA binding"/>
    <property type="evidence" value="ECO:0000318"/>
    <property type="project" value="GO_Central"/>
</dbReference>
<dbReference type="GO" id="GO:0033173">
    <property type="term" value="P:calcineurin-NFAT signaling cascade"/>
    <property type="evidence" value="ECO:0000318"/>
    <property type="project" value="GO_Central"/>
</dbReference>
<dbReference type="GO" id="GO:0045944">
    <property type="term" value="P:positive regulation of transcription by RNA polymerase II"/>
    <property type="evidence" value="ECO:0000318"/>
    <property type="project" value="GO_Central"/>
</dbReference>
<dbReference type="CDD" id="cd07881">
    <property type="entry name" value="RHD-n_NFAT"/>
    <property type="match status" value="1"/>
</dbReference>
<dbReference type="FunFam" id="2.60.40.10:FF:000040">
    <property type="entry name" value="Nuclear factor of activated T-cells, cytoplasmic, calcineurin-dependent 2"/>
    <property type="match status" value="1"/>
</dbReference>
<dbReference type="FunFam" id="2.60.40.340:FF:000001">
    <property type="entry name" value="Nuclear factor of activated T-cells, cytoplasmic, calcineurin-dependent 2"/>
    <property type="match status" value="1"/>
</dbReference>
<dbReference type="Gene3D" id="2.60.40.10">
    <property type="entry name" value="Immunoglobulins"/>
    <property type="match status" value="1"/>
</dbReference>
<dbReference type="Gene3D" id="2.60.40.340">
    <property type="entry name" value="Rel homology domain (RHD), DNA-binding domain"/>
    <property type="match status" value="1"/>
</dbReference>
<dbReference type="InterPro" id="IPR013783">
    <property type="entry name" value="Ig-like_fold"/>
</dbReference>
<dbReference type="InterPro" id="IPR014756">
    <property type="entry name" value="Ig_E-set"/>
</dbReference>
<dbReference type="InterPro" id="IPR002909">
    <property type="entry name" value="IPT_dom"/>
</dbReference>
<dbReference type="InterPro" id="IPR008366">
    <property type="entry name" value="NFAT"/>
</dbReference>
<dbReference type="InterPro" id="IPR008967">
    <property type="entry name" value="p53-like_TF_DNA-bd_sf"/>
</dbReference>
<dbReference type="InterPro" id="IPR032397">
    <property type="entry name" value="RHD_dimer"/>
</dbReference>
<dbReference type="InterPro" id="IPR011539">
    <property type="entry name" value="RHD_DNA_bind_dom"/>
</dbReference>
<dbReference type="InterPro" id="IPR037059">
    <property type="entry name" value="RHD_DNA_bind_dom_sf"/>
</dbReference>
<dbReference type="PANTHER" id="PTHR12533">
    <property type="entry name" value="NFAT"/>
    <property type="match status" value="1"/>
</dbReference>
<dbReference type="PANTHER" id="PTHR12533:SF5">
    <property type="entry name" value="NUCLEAR FACTOR OF ACTIVATED T-CELLS, CYTOPLASMIC 1"/>
    <property type="match status" value="1"/>
</dbReference>
<dbReference type="Pfam" id="PF16179">
    <property type="entry name" value="RHD_dimer"/>
    <property type="match status" value="1"/>
</dbReference>
<dbReference type="Pfam" id="PF00554">
    <property type="entry name" value="RHD_DNA_bind"/>
    <property type="match status" value="1"/>
</dbReference>
<dbReference type="PRINTS" id="PR01789">
    <property type="entry name" value="NUCFACTORATC"/>
</dbReference>
<dbReference type="SMART" id="SM00429">
    <property type="entry name" value="IPT"/>
    <property type="match status" value="1"/>
</dbReference>
<dbReference type="SUPFAM" id="SSF81296">
    <property type="entry name" value="E set domains"/>
    <property type="match status" value="1"/>
</dbReference>
<dbReference type="SUPFAM" id="SSF49417">
    <property type="entry name" value="p53-like transcription factors"/>
    <property type="match status" value="1"/>
</dbReference>
<dbReference type="PROSITE" id="PS50254">
    <property type="entry name" value="REL_2"/>
    <property type="match status" value="1"/>
</dbReference>
<reference key="1">
    <citation type="journal article" date="2009" name="Science">
        <title>The genome sequence of taurine cattle: a window to ruminant biology and evolution.</title>
        <authorList>
            <consortium name="The bovine genome sequencing and analysis consortium"/>
        </authorList>
    </citation>
    <scope>NUCLEOTIDE SEQUENCE [LARGE SCALE GENOMIC DNA]</scope>
    <source>
        <strain>Hereford</strain>
    </source>
</reference>
<reference evidence="7" key="2">
    <citation type="journal article" date="1994" name="Nature">
        <title>NF-AT components define a family of transcription factors targeted in T-cell activation.</title>
        <authorList>
            <person name="Northrop J.P."/>
            <person name="Ho S.N."/>
            <person name="Chen L."/>
            <person name="Thomas D.J."/>
            <person name="Timmerman L.A."/>
            <person name="Nolan G.P."/>
            <person name="Admon A."/>
            <person name="Crabtree G.R."/>
        </authorList>
    </citation>
    <scope>PROTEIN SEQUENCE OF 415-430; 432-441; 518-534; 536-545; 554-560 AND 612-615</scope>
    <source>
        <tissue evidence="6">Thymus</tissue>
    </source>
</reference>
<accession>P98201</accession>
<name>NFAC1_BOVIN</name>
<feature type="chain" id="PRO_0000299065" description="Nuclear factor of activated T-cells, cytoplasmic 1">
    <location>
        <begin position="1"/>
        <end position="803"/>
    </location>
</feature>
<feature type="repeat" description="1">
    <location>
        <begin position="184"/>
        <end position="200"/>
    </location>
</feature>
<feature type="repeat" description="2">
    <location>
        <begin position="214"/>
        <end position="230"/>
    </location>
</feature>
<feature type="repeat" description="3">
    <location>
        <begin position="263"/>
        <end position="279"/>
    </location>
</feature>
<feature type="domain" description="RHD" evidence="4">
    <location>
        <begin position="389"/>
        <end position="571"/>
    </location>
</feature>
<feature type="DNA-binding region" evidence="3">
    <location>
        <begin position="418"/>
        <end position="425"/>
    </location>
</feature>
<feature type="region of interest" description="Calcineurin-binding" evidence="1">
    <location>
        <begin position="101"/>
        <end position="106"/>
    </location>
</feature>
<feature type="region of interest" description="Transactivation domain A (TAD-A)" evidence="1">
    <location>
        <begin position="109"/>
        <end position="199"/>
    </location>
</feature>
<feature type="region of interest" description="Disordered" evidence="5">
    <location>
        <begin position="181"/>
        <end position="279"/>
    </location>
</feature>
<feature type="region of interest" description="3 X SP repeats">
    <location>
        <begin position="184"/>
        <end position="279"/>
    </location>
</feature>
<feature type="region of interest" description="Disordered" evidence="5">
    <location>
        <begin position="723"/>
        <end position="803"/>
    </location>
</feature>
<feature type="short sequence motif" description="Nuclear localization signal" evidence="1">
    <location>
        <begin position="246"/>
        <end position="248"/>
    </location>
</feature>
<feature type="short sequence motif" description="Nuclear export signal" evidence="1">
    <location>
        <begin position="291"/>
        <end position="302"/>
    </location>
</feature>
<feature type="short sequence motif" description="Nuclear localization signal" evidence="1">
    <location>
        <begin position="661"/>
        <end position="663"/>
    </location>
</feature>
<feature type="compositionally biased region" description="Polar residues" evidence="5">
    <location>
        <begin position="181"/>
        <end position="195"/>
    </location>
</feature>
<feature type="compositionally biased region" description="Low complexity" evidence="5">
    <location>
        <begin position="214"/>
        <end position="231"/>
    </location>
</feature>
<feature type="compositionally biased region" description="Pro residues" evidence="5">
    <location>
        <begin position="778"/>
        <end position="792"/>
    </location>
</feature>
<feature type="compositionally biased region" description="Low complexity" evidence="5">
    <location>
        <begin position="793"/>
        <end position="803"/>
    </location>
</feature>
<feature type="modified residue" description="Phosphoserine" evidence="3">
    <location>
        <position position="214"/>
    </location>
</feature>
<feature type="modified residue" description="Phosphoserine" evidence="2">
    <location>
        <position position="218"/>
    </location>
</feature>
<feature type="modified residue" description="Phosphoserine; by PKA" evidence="3">
    <location>
        <position position="226"/>
    </location>
</feature>
<feature type="modified residue" description="Phosphoserine; by PKA" evidence="3">
    <location>
        <position position="275"/>
    </location>
</feature>
<feature type="sequence conflict" description="In Ref. 2; AA sequence." evidence="7" ref="2">
    <original>S</original>
    <variation>I</variation>
    <location>
        <position position="439"/>
    </location>
</feature>
<gene>
    <name evidence="3" type="primary">NFATC1</name>
</gene>
<comment type="function">
    <text evidence="2 3">Plays a role in the inducible expression of cytokine genes in T-cells, especially in the induction of the IL-2 or IL-4 gene transcription. Also controls gene expression in embryonic cardiac cells. Could regulate not only the activation and proliferation but also the differentiation and programmed death of T-lymphocytes as well as lymphoid and non-lymphoid cells. Required for osteoclastogenesis and regulates many genes important for osteoclast differentiation and function (By similarity).</text>
</comment>
<comment type="subunit">
    <text evidence="2 3">Member of the multicomponent NFATC transcription complex that consists of at least two components, a pre-existing cytoplasmic component NFATC2 and an inducible nuclear component NFATC1. Other members such as NFATC4, NFATC3 or members of the activating protein-1 family, MAF, GATA4 and Cbp/p300 can also bind the complex. NFATC proteins bind to DNA as monomers (By similarity). Interacts with HOMER2 and HOMER3; this interaction may compete with calcineurin/PPP3CA-binding and hence prevent NFATC1 dephosphorylation and activation (By similarity). Interacts with TLE6/GRG6 (By similarity).</text>
</comment>
<comment type="subcellular location">
    <subcellularLocation>
        <location evidence="3">Cytoplasm</location>
    </subcellularLocation>
    <subcellularLocation>
        <location evidence="3">Nucleus</location>
    </subcellularLocation>
    <text evidence="2 3">Cytoplasmic for the phosphorylated form and nuclear after activation that is controlled by calcineurin-mediated dephosphorylation. Rapid nuclear exit of NFATC is thought to be one mechanism by which cells distinguish between sustained and transient calcium signals. Translocation to the nucleus is increased in the presence of calcium in pre-osteoblasts (By similarity). The subcellular localization of NFATC plays a key role in the regulation of gene transcription. Nuclear translocation OF NFATC1 is enhanced in the presence of TNFSF11. Nuclear translocation is decreased in the presence of FBN1 which can bind and sequester TNFSF11.</text>
</comment>
<comment type="domain">
    <text evidence="3">Rel Similarity Domain (RSD) allows DNA-binding and cooperative interactions with AP1 factors.</text>
</comment>
<comment type="domain">
    <text evidence="1">The N-terminal transactivation domain (TAD-A) binds to and is activated by Cbp/p300. The dephosphorylated form contains two unmasked nuclear localization signals (NLS), which allow translocation of the protein to the nucleus (By similarity).</text>
</comment>
<comment type="PTM">
    <text evidence="1">Phosphorylated by NFATC-kinase and GSK3B; phosphorylation induces NFATC1 nuclear exit and dephosphorylation by calcineurin promotes nuclear import. Phosphorylation by PKA and DYRK2 negatively modulates nuclear accumulation, and promotes subsequent phosphorylation by GSK3B or casein kinase 1 (By similarity).</text>
</comment>
<keyword id="KW-0010">Activator</keyword>
<keyword id="KW-0963">Cytoplasm</keyword>
<keyword id="KW-0903">Direct protein sequencing</keyword>
<keyword id="KW-0238">DNA-binding</keyword>
<keyword id="KW-0539">Nucleus</keyword>
<keyword id="KW-0597">Phosphoprotein</keyword>
<keyword id="KW-1185">Reference proteome</keyword>
<keyword id="KW-0677">Repeat</keyword>
<keyword id="KW-0678">Repressor</keyword>
<keyword id="KW-0804">Transcription</keyword>
<keyword id="KW-0805">Transcription regulation</keyword>
<sequence length="803" mass="85752">MTGLEEDQEFDFDFLFEFNQSDEGAVAAPAEHYGYAAPGLGAGLPLSAAHPSLPAPCHDLQSSAAGVSAVGYGGTVDSGPSGYFLSSGGIRPNGAPALESPRIEITSYLGLHHNSSQFLHEVDVEDVLPKRSPSTATLNLPSLEAYRDPSCLSPASSLSSRSCNSEASSYESSFSYPYASPQTSPWQSPCVSPKTTDPEEGFARGLGACGLLGSPRHSPSTSPRTSVTEESWLGARTSRPSSPCNKRKYGLNGRQLSCSPHPSPTPSPQGSPRVSVTDDTWLGNTTQYTSSAIVAAINALSTDSSLDLGDGVPVKARKTTLDHSPAVALKVEPAGEDLGTTPPTPDFQPEEFAAFQHIRKGAFCDQYLSVPQHPYPWARPRSPASYTSPSLPALDWQLPSHSGPYELRIEVQPKSHHRAHYETEGSRGAVKASAGGHPSVQLHGYVESEPLTLQLFIGTADDRLLRPHAFYQVHRITGKTVSTASHEAVVCSTKVLEIPLLPENNMRATIDCAGILKLRNSDIELRKGETDIGRKNTRVRLVFRVHIPQPNGRTLSLQVASNPIECSQRSAQELPLVEKQSAASGPVLGGKRMVLSGHNFLQDSKVIFVEKAPDGHHIWEMEAKTEGDLCKPNSLVVEIPPFRNQRITSPVQVNFYVCNGKRKRSQYQHFTYLPANVPIIKTEPSDDYEPALTCGPMSQGLSPLPKPCYGQPLALPPDPGACLMPGFPPRPQGSASPELHDLSCAPYGSATAGPGHSPLGLPRPVGGVLASQEAPRPSGVPPGPPQPPPPTLLQPQVSPTSSG</sequence>